<feature type="chain" id="PRO_0000218820" description="Phospholipase D alpha 1">
    <location>
        <begin position="1"/>
        <end position="812"/>
    </location>
</feature>
<feature type="domain" description="C2" evidence="3">
    <location>
        <begin position="1"/>
        <end position="130"/>
    </location>
</feature>
<feature type="domain" description="PLD phosphodiesterase 1" evidence="4">
    <location>
        <begin position="330"/>
        <end position="368"/>
    </location>
</feature>
<feature type="domain" description="PLD phosphodiesterase 2" evidence="4">
    <location>
        <begin position="658"/>
        <end position="685"/>
    </location>
</feature>
<feature type="active site" evidence="4">
    <location>
        <position position="335"/>
    </location>
</feature>
<feature type="active site" evidence="4">
    <location>
        <position position="337"/>
    </location>
</feature>
<feature type="active site" evidence="4">
    <location>
        <position position="342"/>
    </location>
</feature>
<feature type="active site" evidence="4">
    <location>
        <position position="663"/>
    </location>
</feature>
<feature type="active site" evidence="4">
    <location>
        <position position="665"/>
    </location>
</feature>
<feature type="active site" evidence="4">
    <location>
        <position position="670"/>
    </location>
</feature>
<feature type="binding site" evidence="2">
    <location>
        <position position="190"/>
    </location>
    <ligand>
        <name>Ca(2+)</name>
        <dbReference type="ChEBI" id="CHEBI:29108"/>
    </ligand>
</feature>
<feature type="binding site" evidence="2">
    <location>
        <position position="335"/>
    </location>
    <ligand>
        <name>a 1,2-diacyl-sn-glycero-3-phosphate</name>
        <dbReference type="ChEBI" id="CHEBI:58608"/>
    </ligand>
</feature>
<feature type="binding site" evidence="2">
    <location>
        <position position="374"/>
    </location>
    <ligand>
        <name>Ca(2+)</name>
        <dbReference type="ChEBI" id="CHEBI:29108"/>
    </ligand>
</feature>
<feature type="binding site" evidence="2">
    <location>
        <position position="408"/>
    </location>
    <ligand>
        <name>Ca(2+)</name>
        <dbReference type="ChEBI" id="CHEBI:29108"/>
    </ligand>
</feature>
<feature type="binding site" evidence="2">
    <location>
        <position position="524"/>
    </location>
    <ligand>
        <name>a 1,2-diacyl-sn-glycero-3-phosphate</name>
        <dbReference type="ChEBI" id="CHEBI:58608"/>
    </ligand>
</feature>
<feature type="binding site" evidence="2">
    <location>
        <position position="663"/>
    </location>
    <ligand>
        <name>a 1,2-diacyl-sn-glycero-3-phosphate</name>
        <dbReference type="ChEBI" id="CHEBI:58608"/>
    </ligand>
</feature>
<feature type="binding site" evidence="2">
    <location>
        <position position="724"/>
    </location>
    <ligand>
        <name>Ca(2+)</name>
        <dbReference type="ChEBI" id="CHEBI:29108"/>
    </ligand>
</feature>
<evidence type="ECO:0000250" key="1"/>
<evidence type="ECO:0000250" key="2">
    <source>
        <dbReference type="UniProtKB" id="Q38882"/>
    </source>
</evidence>
<evidence type="ECO:0000255" key="3">
    <source>
        <dbReference type="PROSITE-ProRule" id="PRU00041"/>
    </source>
</evidence>
<evidence type="ECO:0000255" key="4">
    <source>
        <dbReference type="PROSITE-ProRule" id="PRU00153"/>
    </source>
</evidence>
<evidence type="ECO:0000305" key="5"/>
<reference key="1">
    <citation type="journal article" date="1995" name="Plant Cell Physiol.">
        <title>Purification and characterization of phospholipase D (PLD) from rice (Oryza sativa L.) and cloning of cDNA for PLD from rice and maize (Zea mays L.).</title>
        <authorList>
            <person name="Ueki J."/>
            <person name="Morioka S."/>
            <person name="Komari T."/>
            <person name="Kumashiro T."/>
        </authorList>
    </citation>
    <scope>NUCLEOTIDE SEQUENCE [MRNA]</scope>
    <source>
        <strain>cv. Missouri 17</strain>
    </source>
</reference>
<keyword id="KW-0106">Calcium</keyword>
<keyword id="KW-0378">Hydrolase</keyword>
<keyword id="KW-0442">Lipid degradation</keyword>
<keyword id="KW-0443">Lipid metabolism</keyword>
<keyword id="KW-0479">Metal-binding</keyword>
<keyword id="KW-1185">Reference proteome</keyword>
<keyword id="KW-0677">Repeat</keyword>
<gene>
    <name type="primary">PLD1</name>
</gene>
<protein>
    <recommendedName>
        <fullName>Phospholipase D alpha 1</fullName>
        <shortName>PLD alpha 1</shortName>
        <ecNumber>3.1.4.4</ecNumber>
    </recommendedName>
    <alternativeName>
        <fullName>Choline phosphatase 1</fullName>
    </alternativeName>
    <alternativeName>
        <fullName>Phosphatidylcholine-hydrolyzing phospholipase D 1</fullName>
    </alternativeName>
</protein>
<accession>Q43270</accession>
<proteinExistence type="evidence at transcript level"/>
<dbReference type="EC" id="3.1.4.4"/>
<dbReference type="EMBL" id="D73410">
    <property type="protein sequence ID" value="BAA11135.1"/>
    <property type="molecule type" value="mRNA"/>
</dbReference>
<dbReference type="PIR" id="T03659">
    <property type="entry name" value="T03659"/>
</dbReference>
<dbReference type="RefSeq" id="NP_001105686.1">
    <property type="nucleotide sequence ID" value="NM_001112216.1"/>
</dbReference>
<dbReference type="SMR" id="Q43270"/>
<dbReference type="FunCoup" id="Q43270">
    <property type="interactions" value="2233"/>
</dbReference>
<dbReference type="STRING" id="4577.Q43270"/>
<dbReference type="PaxDb" id="4577-GRMZM2G054559_P01"/>
<dbReference type="GeneID" id="542702"/>
<dbReference type="KEGG" id="zma:542702"/>
<dbReference type="MaizeGDB" id="113853"/>
<dbReference type="eggNOG" id="KOG1329">
    <property type="taxonomic scope" value="Eukaryota"/>
</dbReference>
<dbReference type="InParanoid" id="Q43270"/>
<dbReference type="OrthoDB" id="14911at2759"/>
<dbReference type="Proteomes" id="UP000007305">
    <property type="component" value="Unplaced"/>
</dbReference>
<dbReference type="ExpressionAtlas" id="Q43270">
    <property type="expression patterns" value="baseline and differential"/>
</dbReference>
<dbReference type="GO" id="GO:0005886">
    <property type="term" value="C:plasma membrane"/>
    <property type="evidence" value="ECO:0000318"/>
    <property type="project" value="GO_Central"/>
</dbReference>
<dbReference type="GO" id="GO:0005509">
    <property type="term" value="F:calcium ion binding"/>
    <property type="evidence" value="ECO:0007669"/>
    <property type="project" value="InterPro"/>
</dbReference>
<dbReference type="GO" id="GO:0004630">
    <property type="term" value="F:phospholipase D activity"/>
    <property type="evidence" value="ECO:0000318"/>
    <property type="project" value="GO_Central"/>
</dbReference>
<dbReference type="GO" id="GO:0046470">
    <property type="term" value="P:phosphatidylcholine metabolic process"/>
    <property type="evidence" value="ECO:0007669"/>
    <property type="project" value="InterPro"/>
</dbReference>
<dbReference type="GO" id="GO:0009395">
    <property type="term" value="P:phospholipid catabolic process"/>
    <property type="evidence" value="ECO:0000318"/>
    <property type="project" value="GO_Central"/>
</dbReference>
<dbReference type="CDD" id="cd04015">
    <property type="entry name" value="C2_plant_PLD"/>
    <property type="match status" value="1"/>
</dbReference>
<dbReference type="FunFam" id="3.30.870.10:FF:000027">
    <property type="entry name" value="Phospholipase D"/>
    <property type="match status" value="1"/>
</dbReference>
<dbReference type="FunFam" id="3.30.870.10:FF:000025">
    <property type="entry name" value="Phospholipase D delta"/>
    <property type="match status" value="1"/>
</dbReference>
<dbReference type="Gene3D" id="2.60.40.150">
    <property type="entry name" value="C2 domain"/>
    <property type="match status" value="1"/>
</dbReference>
<dbReference type="Gene3D" id="3.30.870.10">
    <property type="entry name" value="Endonuclease Chain A"/>
    <property type="match status" value="2"/>
</dbReference>
<dbReference type="InterPro" id="IPR000008">
    <property type="entry name" value="C2_dom"/>
</dbReference>
<dbReference type="InterPro" id="IPR035892">
    <property type="entry name" value="C2_domain_sf"/>
</dbReference>
<dbReference type="InterPro" id="IPR001736">
    <property type="entry name" value="PLipase_D/transphosphatidylase"/>
</dbReference>
<dbReference type="InterPro" id="IPR024632">
    <property type="entry name" value="PLipase_D_C"/>
</dbReference>
<dbReference type="InterPro" id="IPR015679">
    <property type="entry name" value="PLipase_D_fam"/>
</dbReference>
<dbReference type="InterPro" id="IPR011402">
    <property type="entry name" value="PLipase_D_pln"/>
</dbReference>
<dbReference type="PANTHER" id="PTHR18896">
    <property type="entry name" value="PHOSPHOLIPASE D"/>
    <property type="match status" value="1"/>
</dbReference>
<dbReference type="PANTHER" id="PTHR18896:SF115">
    <property type="entry name" value="PHOSPHOLIPASE D ALPHA 1"/>
    <property type="match status" value="1"/>
</dbReference>
<dbReference type="Pfam" id="PF00168">
    <property type="entry name" value="C2"/>
    <property type="match status" value="1"/>
</dbReference>
<dbReference type="Pfam" id="PF12357">
    <property type="entry name" value="PLD_C"/>
    <property type="match status" value="1"/>
</dbReference>
<dbReference type="Pfam" id="PF00614">
    <property type="entry name" value="PLDc"/>
    <property type="match status" value="2"/>
</dbReference>
<dbReference type="PIRSF" id="PIRSF036470">
    <property type="entry name" value="PLD_plant"/>
    <property type="match status" value="1"/>
</dbReference>
<dbReference type="SMART" id="SM00239">
    <property type="entry name" value="C2"/>
    <property type="match status" value="1"/>
</dbReference>
<dbReference type="SMART" id="SM00155">
    <property type="entry name" value="PLDc"/>
    <property type="match status" value="2"/>
</dbReference>
<dbReference type="SUPFAM" id="SSF49562">
    <property type="entry name" value="C2 domain (Calcium/lipid-binding domain, CaLB)"/>
    <property type="match status" value="1"/>
</dbReference>
<dbReference type="SUPFAM" id="SSF56024">
    <property type="entry name" value="Phospholipase D/nuclease"/>
    <property type="match status" value="2"/>
</dbReference>
<dbReference type="PROSITE" id="PS50004">
    <property type="entry name" value="C2"/>
    <property type="match status" value="1"/>
</dbReference>
<dbReference type="PROSITE" id="PS50035">
    <property type="entry name" value="PLD"/>
    <property type="match status" value="2"/>
</dbReference>
<name>PLDA1_MAIZE</name>
<comment type="function">
    <text>Hydrolyzes glycerol-phospholipids at the terminal phosphodiesteric bond. Plays an important role in various cellular processes.</text>
</comment>
<comment type="catalytic activity">
    <reaction>
        <text>a 1,2-diacyl-sn-glycero-3-phosphocholine + H2O = a 1,2-diacyl-sn-glycero-3-phosphate + choline + H(+)</text>
        <dbReference type="Rhea" id="RHEA:14445"/>
        <dbReference type="ChEBI" id="CHEBI:15354"/>
        <dbReference type="ChEBI" id="CHEBI:15377"/>
        <dbReference type="ChEBI" id="CHEBI:15378"/>
        <dbReference type="ChEBI" id="CHEBI:57643"/>
        <dbReference type="ChEBI" id="CHEBI:58608"/>
        <dbReference type="EC" id="3.1.4.4"/>
    </reaction>
</comment>
<comment type="cofactor">
    <cofactor evidence="1">
        <name>Ca(2+)</name>
        <dbReference type="ChEBI" id="CHEBI:29108"/>
    </cofactor>
</comment>
<comment type="subunit">
    <text evidence="1">Monomer.</text>
</comment>
<comment type="domain">
    <text>C2 domain is a calcium-binding fold, and the binding promotes the protein association with membranes. A lower affinity toward calcium can be anticipated for PLD alpha due to the absence of two potential calcium ligands.</text>
</comment>
<comment type="similarity">
    <text evidence="5">Belongs to the phospholipase D family. C2-PLD subfamily.</text>
</comment>
<organism>
    <name type="scientific">Zea mays</name>
    <name type="common">Maize</name>
    <dbReference type="NCBI Taxonomy" id="4577"/>
    <lineage>
        <taxon>Eukaryota</taxon>
        <taxon>Viridiplantae</taxon>
        <taxon>Streptophyta</taxon>
        <taxon>Embryophyta</taxon>
        <taxon>Tracheophyta</taxon>
        <taxon>Spermatophyta</taxon>
        <taxon>Magnoliopsida</taxon>
        <taxon>Liliopsida</taxon>
        <taxon>Poales</taxon>
        <taxon>Poaceae</taxon>
        <taxon>PACMAD clade</taxon>
        <taxon>Panicoideae</taxon>
        <taxon>Andropogonodae</taxon>
        <taxon>Andropogoneae</taxon>
        <taxon>Tripsacinae</taxon>
        <taxon>Zea</taxon>
    </lineage>
</organism>
<sequence length="812" mass="92242">MAQILLHGTLHATIFEAESLSNPHRATGGAPKFIRKLVEGIEDTVGVGKGATKIYATVDLEKARVGRTRMISNEPVNPRWYESFHIYCAHMAADVIFTVKIDNSIGASLIGRAYLAVQDLLGGEEIDKWLEISDENREPVGDSKIHVKLQYFDVGKDRNWARGVRSTKYPGVPYTFFSQRQGCKVTLYQDAHVPDNFVPRIQLADGKNYEPHRCWEDIFDAISKAQHLIYITGWSVYTEITLVRDTNRPKPGGDVTLGELLKRKASEGVRVLMLVWDDRTSVGLLKKDGLMATHDEETANYFHGTDVNCVLCPRNPDDSGSFVQDLQISTMFTHHQKIVVVDHEMPNQGSQQRRIVSFIGGIDLCDGRYDTQYHSLFRTLDTVHHDDFHQPNFEGGSIKKGGPREPWHDIHSRLEGPIAWDVLYNFEQRWRKQGGKDLLVRLRDLPDIIIPPSPVMFPEDRETWNVQLFRSIDGGAAFGFPETPEEAARAGLVSGKDQIIDRSIQDAYVNAIRRAKNFIYIENQYFLGSSYGWKPEGIKPEEIGALHLIPKELSLKIVSKIEAGERFTVYVVVPMWPEGVPESASVQAILDWQRRTMEMMYTDIAQALEANGIEANPKDYLTFFCLGNREVKQEGEYEPEEHPEPDTDYIRAQEARRFMIYVHTKMMIVDDEYIIIGSANINQRSMDGARDSEIAMGAYQPYHLATRQPARGQIHGFRMSLWYEHLGMLEDVFQRPESVECVQKVNEVAEKYWDLYSSDDLEQDLPGHLLSYPIGVTADGSVTELPGMENFPDTRARVLGNKSDYLPPILTT</sequence>